<keyword id="KW-0963">Cytoplasm</keyword>
<gene>
    <name evidence="1" type="primary">yafD</name>
    <name type="ordered locus">EFER_0238</name>
</gene>
<dbReference type="EMBL" id="CU928158">
    <property type="protein sequence ID" value="CAQ87807.1"/>
    <property type="molecule type" value="Genomic_DNA"/>
</dbReference>
<dbReference type="RefSeq" id="WP_001230983.1">
    <property type="nucleotide sequence ID" value="NC_011740.1"/>
</dbReference>
<dbReference type="SMR" id="B7LW84"/>
<dbReference type="KEGG" id="efe:EFER_0238"/>
<dbReference type="HOGENOM" id="CLU_083563_0_0_6"/>
<dbReference type="OrthoDB" id="9793162at2"/>
<dbReference type="Proteomes" id="UP000000745">
    <property type="component" value="Chromosome"/>
</dbReference>
<dbReference type="GO" id="GO:0005737">
    <property type="term" value="C:cytoplasm"/>
    <property type="evidence" value="ECO:0007669"/>
    <property type="project" value="UniProtKB-SubCell"/>
</dbReference>
<dbReference type="GO" id="GO:0003824">
    <property type="term" value="F:catalytic activity"/>
    <property type="evidence" value="ECO:0007669"/>
    <property type="project" value="InterPro"/>
</dbReference>
<dbReference type="Gene3D" id="3.60.10.10">
    <property type="entry name" value="Endonuclease/exonuclease/phosphatase"/>
    <property type="match status" value="1"/>
</dbReference>
<dbReference type="HAMAP" id="MF_01119">
    <property type="entry name" value="UPF0294"/>
    <property type="match status" value="1"/>
</dbReference>
<dbReference type="InterPro" id="IPR036691">
    <property type="entry name" value="Endo/exonu/phosph_ase_sf"/>
</dbReference>
<dbReference type="InterPro" id="IPR005135">
    <property type="entry name" value="Endo/exonuclease/phosphatase"/>
</dbReference>
<dbReference type="InterPro" id="IPR022958">
    <property type="entry name" value="UPF0294"/>
</dbReference>
<dbReference type="NCBIfam" id="NF003839">
    <property type="entry name" value="PRK05421.1-1"/>
    <property type="match status" value="1"/>
</dbReference>
<dbReference type="NCBIfam" id="NF003840">
    <property type="entry name" value="PRK05421.1-2"/>
    <property type="match status" value="1"/>
</dbReference>
<dbReference type="NCBIfam" id="NF003841">
    <property type="entry name" value="PRK05421.1-3"/>
    <property type="match status" value="1"/>
</dbReference>
<dbReference type="NCBIfam" id="NF003842">
    <property type="entry name" value="PRK05421.1-4"/>
    <property type="match status" value="1"/>
</dbReference>
<dbReference type="Pfam" id="PF03372">
    <property type="entry name" value="Exo_endo_phos"/>
    <property type="match status" value="1"/>
</dbReference>
<dbReference type="SUPFAM" id="SSF56219">
    <property type="entry name" value="DNase I-like"/>
    <property type="match status" value="1"/>
</dbReference>
<name>YAFD_ESCF3</name>
<evidence type="ECO:0000255" key="1">
    <source>
        <dbReference type="HAMAP-Rule" id="MF_01119"/>
    </source>
</evidence>
<comment type="subcellular location">
    <subcellularLocation>
        <location evidence="1">Cytoplasm</location>
    </subcellularLocation>
</comment>
<comment type="similarity">
    <text evidence="1">Belongs to the UPF0294 family.</text>
</comment>
<sequence>MRKNTYAMRYVAGQPAERILPPGSFASIGQALPPGEPLSTEERIRILVWNIYKQQRAEWLSVLKNYGKDAHLVLLQEAQTTPELVQFATANYLAADQVPAFVLPQHPSGVMTLSAAHPVYCCPLREREPILRLAKSALVTVYPLPDTRLLMVVNIHAVNFSLGVDVYSKQLLPIGDQIAHHSGPVIMAGDFNAWSRRRMNALYRFAREMSLRQVRFTDDQRRRAFGRPLDFVFYRGLNVSEASVLVTRASDHNPLLVEFSPGKPDK</sequence>
<protein>
    <recommendedName>
        <fullName evidence="1">UPF0294 protein YafD</fullName>
    </recommendedName>
</protein>
<proteinExistence type="inferred from homology"/>
<reference key="1">
    <citation type="journal article" date="2009" name="PLoS Genet.">
        <title>Organised genome dynamics in the Escherichia coli species results in highly diverse adaptive paths.</title>
        <authorList>
            <person name="Touchon M."/>
            <person name="Hoede C."/>
            <person name="Tenaillon O."/>
            <person name="Barbe V."/>
            <person name="Baeriswyl S."/>
            <person name="Bidet P."/>
            <person name="Bingen E."/>
            <person name="Bonacorsi S."/>
            <person name="Bouchier C."/>
            <person name="Bouvet O."/>
            <person name="Calteau A."/>
            <person name="Chiapello H."/>
            <person name="Clermont O."/>
            <person name="Cruveiller S."/>
            <person name="Danchin A."/>
            <person name="Diard M."/>
            <person name="Dossat C."/>
            <person name="Karoui M.E."/>
            <person name="Frapy E."/>
            <person name="Garry L."/>
            <person name="Ghigo J.M."/>
            <person name="Gilles A.M."/>
            <person name="Johnson J."/>
            <person name="Le Bouguenec C."/>
            <person name="Lescat M."/>
            <person name="Mangenot S."/>
            <person name="Martinez-Jehanne V."/>
            <person name="Matic I."/>
            <person name="Nassif X."/>
            <person name="Oztas S."/>
            <person name="Petit M.A."/>
            <person name="Pichon C."/>
            <person name="Rouy Z."/>
            <person name="Ruf C.S."/>
            <person name="Schneider D."/>
            <person name="Tourret J."/>
            <person name="Vacherie B."/>
            <person name="Vallenet D."/>
            <person name="Medigue C."/>
            <person name="Rocha E.P.C."/>
            <person name="Denamur E."/>
        </authorList>
    </citation>
    <scope>NUCLEOTIDE SEQUENCE [LARGE SCALE GENOMIC DNA]</scope>
    <source>
        <strain>ATCC 35469 / DSM 13698 / BCRC 15582 / CCUG 18766 / IAM 14443 / JCM 21226 / LMG 7866 / NBRC 102419 / NCTC 12128 / CDC 0568-73</strain>
    </source>
</reference>
<accession>B7LW84</accession>
<organism>
    <name type="scientific">Escherichia fergusonii (strain ATCC 35469 / DSM 13698 / CCUG 18766 / IAM 14443 / JCM 21226 / LMG 7866 / NBRC 102419 / NCTC 12128 / CDC 0568-73)</name>
    <dbReference type="NCBI Taxonomy" id="585054"/>
    <lineage>
        <taxon>Bacteria</taxon>
        <taxon>Pseudomonadati</taxon>
        <taxon>Pseudomonadota</taxon>
        <taxon>Gammaproteobacteria</taxon>
        <taxon>Enterobacterales</taxon>
        <taxon>Enterobacteriaceae</taxon>
        <taxon>Escherichia</taxon>
    </lineage>
</organism>
<feature type="chain" id="PRO_1000137245" description="UPF0294 protein YafD">
    <location>
        <begin position="1"/>
        <end position="266"/>
    </location>
</feature>